<comment type="function">
    <text>Catalyzes the oxidation of 3-carboxy-2-hydroxy-4-methylpentanoate (3-isopropylmalate) to 3-carboxy-4-methyl-2-oxopentanoate. The product decarboxylates to 4-methyl-2 oxopentanoate.</text>
</comment>
<comment type="catalytic activity">
    <reaction>
        <text>(2R,3S)-3-isopropylmalate + NAD(+) = 4-methyl-2-oxopentanoate + CO2 + NADH</text>
        <dbReference type="Rhea" id="RHEA:32271"/>
        <dbReference type="ChEBI" id="CHEBI:16526"/>
        <dbReference type="ChEBI" id="CHEBI:17865"/>
        <dbReference type="ChEBI" id="CHEBI:35121"/>
        <dbReference type="ChEBI" id="CHEBI:57540"/>
        <dbReference type="ChEBI" id="CHEBI:57945"/>
        <dbReference type="EC" id="1.1.1.85"/>
    </reaction>
</comment>
<comment type="cofactor">
    <cofactor evidence="1">
        <name>Mg(2+)</name>
        <dbReference type="ChEBI" id="CHEBI:18420"/>
    </cofactor>
    <cofactor evidence="1">
        <name>Mn(2+)</name>
        <dbReference type="ChEBI" id="CHEBI:29035"/>
    </cofactor>
    <text evidence="1">Binds 1 Mg(2+) or Mn(2+) ion per subunit.</text>
</comment>
<comment type="pathway">
    <text>Amino-acid biosynthesis; L-leucine biosynthesis; L-leucine from 3-methyl-2-oxobutanoate: step 3/4.</text>
</comment>
<comment type="subunit">
    <text evidence="1">Homodimer.</text>
</comment>
<comment type="subcellular location">
    <subcellularLocation>
        <location>Cytoplasm</location>
    </subcellularLocation>
</comment>
<comment type="similarity">
    <text evidence="2">Belongs to the isocitrate and isopropylmalate dehydrogenases family.</text>
</comment>
<keyword id="KW-0028">Amino-acid biosynthesis</keyword>
<keyword id="KW-0100">Branched-chain amino acid biosynthesis</keyword>
<keyword id="KW-0963">Cytoplasm</keyword>
<keyword id="KW-0432">Leucine biosynthesis</keyword>
<keyword id="KW-0460">Magnesium</keyword>
<keyword id="KW-0464">Manganese</keyword>
<keyword id="KW-0479">Metal-binding</keyword>
<keyword id="KW-0520">NAD</keyword>
<keyword id="KW-0560">Oxidoreductase</keyword>
<keyword id="KW-1185">Reference proteome</keyword>
<feature type="chain" id="PRO_0000083610" description="3-isopropylmalate dehydrogenase">
    <location>
        <begin position="1"/>
        <end position="362"/>
    </location>
</feature>
<feature type="binding site" evidence="1">
    <location>
        <begin position="77"/>
        <end position="88"/>
    </location>
    <ligand>
        <name>NAD(+)</name>
        <dbReference type="ChEBI" id="CHEBI:57540"/>
    </ligand>
</feature>
<feature type="binding site" evidence="1">
    <location>
        <position position="95"/>
    </location>
    <ligand>
        <name>substrate</name>
    </ligand>
</feature>
<feature type="binding site" evidence="1">
    <location>
        <position position="105"/>
    </location>
    <ligand>
        <name>substrate</name>
    </ligand>
</feature>
<feature type="binding site" evidence="1">
    <location>
        <position position="134"/>
    </location>
    <ligand>
        <name>substrate</name>
    </ligand>
</feature>
<feature type="binding site" evidence="1">
    <location>
        <position position="223"/>
    </location>
    <ligand>
        <name>Mg(2+)</name>
        <dbReference type="ChEBI" id="CHEBI:18420"/>
    </ligand>
</feature>
<feature type="binding site" evidence="1">
    <location>
        <position position="223"/>
    </location>
    <ligand>
        <name>substrate</name>
    </ligand>
</feature>
<feature type="binding site" evidence="1">
    <location>
        <position position="248"/>
    </location>
    <ligand>
        <name>Mg(2+)</name>
        <dbReference type="ChEBI" id="CHEBI:18420"/>
    </ligand>
</feature>
<feature type="binding site" evidence="1">
    <location>
        <position position="252"/>
    </location>
    <ligand>
        <name>Mg(2+)</name>
        <dbReference type="ChEBI" id="CHEBI:18420"/>
    </ligand>
</feature>
<feature type="binding site" evidence="1">
    <location>
        <begin position="287"/>
        <end position="298"/>
    </location>
    <ligand>
        <name>NAD(+)</name>
        <dbReference type="ChEBI" id="CHEBI:57540"/>
    </ligand>
</feature>
<feature type="site" description="Important for catalysis" evidence="1">
    <location>
        <position position="141"/>
    </location>
</feature>
<feature type="site" description="Important for catalysis" evidence="1">
    <location>
        <position position="190"/>
    </location>
</feature>
<proteinExistence type="inferred from homology"/>
<evidence type="ECO:0000250" key="1"/>
<evidence type="ECO:0000305" key="2"/>
<accession>P23390</accession>
<dbReference type="EC" id="1.1.1.85"/>
<dbReference type="EMBL" id="X65545">
    <property type="protein sequence ID" value="CAA46514.1"/>
    <property type="molecule type" value="Genomic_DNA"/>
</dbReference>
<dbReference type="EMBL" id="CR382124">
    <property type="protein sequence ID" value="CAH00374.1"/>
    <property type="molecule type" value="Genomic_DNA"/>
</dbReference>
<dbReference type="PIR" id="S25369">
    <property type="entry name" value="S25369"/>
</dbReference>
<dbReference type="RefSeq" id="XP_453278.1">
    <property type="nucleotide sequence ID" value="XM_453278.1"/>
</dbReference>
<dbReference type="SMR" id="P23390"/>
<dbReference type="FunCoup" id="P23390">
    <property type="interactions" value="1000"/>
</dbReference>
<dbReference type="STRING" id="284590.P23390"/>
<dbReference type="PaxDb" id="284590-P23390"/>
<dbReference type="KEGG" id="kla:KLLA0_D04906g"/>
<dbReference type="eggNOG" id="KOG0786">
    <property type="taxonomic scope" value="Eukaryota"/>
</dbReference>
<dbReference type="HOGENOM" id="CLU_031953_0_3_1"/>
<dbReference type="InParanoid" id="P23390"/>
<dbReference type="OMA" id="EYDLGAR"/>
<dbReference type="UniPathway" id="UPA00048">
    <property type="reaction ID" value="UER00072"/>
</dbReference>
<dbReference type="Proteomes" id="UP000000598">
    <property type="component" value="Chromosome D"/>
</dbReference>
<dbReference type="GO" id="GO:0005829">
    <property type="term" value="C:cytosol"/>
    <property type="evidence" value="ECO:0007669"/>
    <property type="project" value="TreeGrafter"/>
</dbReference>
<dbReference type="GO" id="GO:0003862">
    <property type="term" value="F:3-isopropylmalate dehydrogenase activity"/>
    <property type="evidence" value="ECO:0007669"/>
    <property type="project" value="UniProtKB-EC"/>
</dbReference>
<dbReference type="GO" id="GO:0000287">
    <property type="term" value="F:magnesium ion binding"/>
    <property type="evidence" value="ECO:0007669"/>
    <property type="project" value="InterPro"/>
</dbReference>
<dbReference type="GO" id="GO:0051287">
    <property type="term" value="F:NAD binding"/>
    <property type="evidence" value="ECO:0007669"/>
    <property type="project" value="InterPro"/>
</dbReference>
<dbReference type="GO" id="GO:0009098">
    <property type="term" value="P:L-leucine biosynthetic process"/>
    <property type="evidence" value="ECO:0007669"/>
    <property type="project" value="UniProtKB-UniPathway"/>
</dbReference>
<dbReference type="FunFam" id="3.40.718.10:FF:000006">
    <property type="entry name" value="3-isopropylmalate dehydrogenase"/>
    <property type="match status" value="1"/>
</dbReference>
<dbReference type="Gene3D" id="3.40.718.10">
    <property type="entry name" value="Isopropylmalate Dehydrogenase"/>
    <property type="match status" value="1"/>
</dbReference>
<dbReference type="InterPro" id="IPR019818">
    <property type="entry name" value="IsoCit/isopropylmalate_DH_CS"/>
</dbReference>
<dbReference type="InterPro" id="IPR024084">
    <property type="entry name" value="IsoPropMal-DH-like_dom"/>
</dbReference>
<dbReference type="InterPro" id="IPR004429">
    <property type="entry name" value="Isopropylmalate_DH"/>
</dbReference>
<dbReference type="NCBIfam" id="TIGR00169">
    <property type="entry name" value="leuB"/>
    <property type="match status" value="1"/>
</dbReference>
<dbReference type="PANTHER" id="PTHR42979">
    <property type="entry name" value="3-ISOPROPYLMALATE DEHYDROGENASE"/>
    <property type="match status" value="1"/>
</dbReference>
<dbReference type="PANTHER" id="PTHR42979:SF1">
    <property type="entry name" value="3-ISOPROPYLMALATE DEHYDROGENASE"/>
    <property type="match status" value="1"/>
</dbReference>
<dbReference type="Pfam" id="PF00180">
    <property type="entry name" value="Iso_dh"/>
    <property type="match status" value="1"/>
</dbReference>
<dbReference type="SMART" id="SM01329">
    <property type="entry name" value="Iso_dh"/>
    <property type="match status" value="1"/>
</dbReference>
<dbReference type="SUPFAM" id="SSF53659">
    <property type="entry name" value="Isocitrate/Isopropylmalate dehydrogenase-like"/>
    <property type="match status" value="1"/>
</dbReference>
<dbReference type="PROSITE" id="PS00470">
    <property type="entry name" value="IDH_IMDH"/>
    <property type="match status" value="1"/>
</dbReference>
<gene>
    <name type="primary">LEU2</name>
    <name type="ordered locus">KLLA0D04906g</name>
</gene>
<sequence length="362" mass="38629">MSKNIVVLPGDHVGKEVTDEAIKVLNAIAEVRPEIKFNFQHHLIGGAAIDATGTPLPDEALEASKKADAVLLGAVGGPKWGTGAVRPEQGLLKIRKELGLYANLRPCNFASDSLLDLSPLKPEYAKGTDFVVVRELVGGIYFGERKEDEGDGVAWDSEKYSVPEVQRITRMAAFLALQQNPPLPIWSLDKANVLASSRLWRKTVEETIKTEFPQLTVQHQLIDSAAMILVKSPTKLNGVVITNNMFGDIISDEASVIPGSLGLLPSASLASLPDTNKAFGLYEPCHGSAPDLPANKVNPIATILSAAMMLKLSLDLVEEGRALEEAVRNVLDAGVRTGDLGGSNSTTEVGDAIAKAVKEILA</sequence>
<protein>
    <recommendedName>
        <fullName>3-isopropylmalate dehydrogenase</fullName>
        <shortName>3-IPM-DH</shortName>
        <shortName>IMDH</shortName>
        <ecNumber>1.1.1.85</ecNumber>
    </recommendedName>
    <alternativeName>
        <fullName>Beta-IPM dehydrogenase</fullName>
    </alternativeName>
</protein>
<name>LEU3_KLULA</name>
<organism>
    <name type="scientific">Kluyveromyces lactis (strain ATCC 8585 / CBS 2359 / DSM 70799 / NBRC 1267 / NRRL Y-1140 / WM37)</name>
    <name type="common">Yeast</name>
    <name type="synonym">Candida sphaerica</name>
    <dbReference type="NCBI Taxonomy" id="284590"/>
    <lineage>
        <taxon>Eukaryota</taxon>
        <taxon>Fungi</taxon>
        <taxon>Dikarya</taxon>
        <taxon>Ascomycota</taxon>
        <taxon>Saccharomycotina</taxon>
        <taxon>Saccharomycetes</taxon>
        <taxon>Saccharomycetales</taxon>
        <taxon>Saccharomycetaceae</taxon>
        <taxon>Kluyveromyces</taxon>
    </lineage>
</organism>
<reference key="1">
    <citation type="journal article" date="1992" name="Yeast">
        <title>LEU2 gene homolog in Kluyveromyces lactis.</title>
        <authorList>
            <person name="Zhang Y.-P."/>
            <person name="Chen X.J."/>
            <person name="Li Y.Y."/>
            <person name="Fukuhara H."/>
        </authorList>
    </citation>
    <scope>NUCLEOTIDE SEQUENCE [GENOMIC DNA]</scope>
    <source>
        <strain>ATCC 76492 / CBS 2359/152 / CLIB 210</strain>
    </source>
</reference>
<reference key="2">
    <citation type="journal article" date="2004" name="Nature">
        <title>Genome evolution in yeasts.</title>
        <authorList>
            <person name="Dujon B."/>
            <person name="Sherman D."/>
            <person name="Fischer G."/>
            <person name="Durrens P."/>
            <person name="Casaregola S."/>
            <person name="Lafontaine I."/>
            <person name="de Montigny J."/>
            <person name="Marck C."/>
            <person name="Neuveglise C."/>
            <person name="Talla E."/>
            <person name="Goffard N."/>
            <person name="Frangeul L."/>
            <person name="Aigle M."/>
            <person name="Anthouard V."/>
            <person name="Babour A."/>
            <person name="Barbe V."/>
            <person name="Barnay S."/>
            <person name="Blanchin S."/>
            <person name="Beckerich J.-M."/>
            <person name="Beyne E."/>
            <person name="Bleykasten C."/>
            <person name="Boisrame A."/>
            <person name="Boyer J."/>
            <person name="Cattolico L."/>
            <person name="Confanioleri F."/>
            <person name="de Daruvar A."/>
            <person name="Despons L."/>
            <person name="Fabre E."/>
            <person name="Fairhead C."/>
            <person name="Ferry-Dumazet H."/>
            <person name="Groppi A."/>
            <person name="Hantraye F."/>
            <person name="Hennequin C."/>
            <person name="Jauniaux N."/>
            <person name="Joyet P."/>
            <person name="Kachouri R."/>
            <person name="Kerrest A."/>
            <person name="Koszul R."/>
            <person name="Lemaire M."/>
            <person name="Lesur I."/>
            <person name="Ma L."/>
            <person name="Muller H."/>
            <person name="Nicaud J.-M."/>
            <person name="Nikolski M."/>
            <person name="Oztas S."/>
            <person name="Ozier-Kalogeropoulos O."/>
            <person name="Pellenz S."/>
            <person name="Potier S."/>
            <person name="Richard G.-F."/>
            <person name="Straub M.-L."/>
            <person name="Suleau A."/>
            <person name="Swennen D."/>
            <person name="Tekaia F."/>
            <person name="Wesolowski-Louvel M."/>
            <person name="Westhof E."/>
            <person name="Wirth B."/>
            <person name="Zeniou-Meyer M."/>
            <person name="Zivanovic Y."/>
            <person name="Bolotin-Fukuhara M."/>
            <person name="Thierry A."/>
            <person name="Bouchier C."/>
            <person name="Caudron B."/>
            <person name="Scarpelli C."/>
            <person name="Gaillardin C."/>
            <person name="Weissenbach J."/>
            <person name="Wincker P."/>
            <person name="Souciet J.-L."/>
        </authorList>
    </citation>
    <scope>NUCLEOTIDE SEQUENCE [LARGE SCALE GENOMIC DNA]</scope>
    <source>
        <strain>ATCC 8585 / CBS 2359 / DSM 70799 / NBRC 1267 / NRRL Y-1140 / WM37</strain>
    </source>
</reference>